<dbReference type="EMBL" id="CP000561">
    <property type="protein sequence ID" value="ABO07689.1"/>
    <property type="molecule type" value="Genomic_DNA"/>
</dbReference>
<dbReference type="RefSeq" id="WP_011848946.1">
    <property type="nucleotide sequence ID" value="NC_009073.1"/>
</dbReference>
<dbReference type="STRING" id="410359.Pcal_0252"/>
<dbReference type="GeneID" id="4909515"/>
<dbReference type="KEGG" id="pcl:Pcal_0252"/>
<dbReference type="eggNOG" id="arCOG01302">
    <property type="taxonomic scope" value="Archaea"/>
</dbReference>
<dbReference type="HOGENOM" id="CLU_172276_3_0_2"/>
<dbReference type="OrthoDB" id="14794at2157"/>
<dbReference type="Proteomes" id="UP000001431">
    <property type="component" value="Chromosome"/>
</dbReference>
<dbReference type="HAMAP" id="MF_01245">
    <property type="entry name" value="UPF0248"/>
    <property type="match status" value="1"/>
</dbReference>
<dbReference type="InterPro" id="IPR040459">
    <property type="entry name" value="MJ1316"/>
</dbReference>
<dbReference type="InterPro" id="IPR007547">
    <property type="entry name" value="UPF0248"/>
</dbReference>
<dbReference type="Pfam" id="PF04457">
    <property type="entry name" value="MJ1316"/>
    <property type="match status" value="1"/>
</dbReference>
<protein>
    <recommendedName>
        <fullName evidence="1">UPF0248 protein Pcal_0252</fullName>
    </recommendedName>
</protein>
<accession>A3MSS2</accession>
<organism>
    <name type="scientific">Pyrobaculum calidifontis (strain DSM 21063 / JCM 11548 / VA1)</name>
    <dbReference type="NCBI Taxonomy" id="410359"/>
    <lineage>
        <taxon>Archaea</taxon>
        <taxon>Thermoproteota</taxon>
        <taxon>Thermoprotei</taxon>
        <taxon>Thermoproteales</taxon>
        <taxon>Thermoproteaceae</taxon>
        <taxon>Pyrobaculum</taxon>
    </lineage>
</organism>
<evidence type="ECO:0000255" key="1">
    <source>
        <dbReference type="HAMAP-Rule" id="MF_01245"/>
    </source>
</evidence>
<proteinExistence type="inferred from homology"/>
<sequence>MRQLFNKLKWTGAKAYFSYVSRGAAGGEEVASIDDVVEVGSGGVTISTGSGERYIPYHRIVEVRLATGEVLLDRRKR</sequence>
<feature type="chain" id="PRO_1000067075" description="UPF0248 protein Pcal_0252">
    <location>
        <begin position="1"/>
        <end position="77"/>
    </location>
</feature>
<reference key="1">
    <citation type="submission" date="2007-02" db="EMBL/GenBank/DDBJ databases">
        <title>Complete sequence of Pyrobaculum calidifontis JCM 11548.</title>
        <authorList>
            <consortium name="US DOE Joint Genome Institute"/>
            <person name="Copeland A."/>
            <person name="Lucas S."/>
            <person name="Lapidus A."/>
            <person name="Barry K."/>
            <person name="Glavina del Rio T."/>
            <person name="Dalin E."/>
            <person name="Tice H."/>
            <person name="Pitluck S."/>
            <person name="Chain P."/>
            <person name="Malfatti S."/>
            <person name="Shin M."/>
            <person name="Vergez L."/>
            <person name="Schmutz J."/>
            <person name="Larimer F."/>
            <person name="Land M."/>
            <person name="Hauser L."/>
            <person name="Kyrpides N."/>
            <person name="Mikhailova N."/>
            <person name="Cozen A.E."/>
            <person name="Fitz-Gibbon S.T."/>
            <person name="House C.H."/>
            <person name="Saltikov C."/>
            <person name="Lowe T.M."/>
            <person name="Richardson P."/>
        </authorList>
    </citation>
    <scope>NUCLEOTIDE SEQUENCE [LARGE SCALE GENOMIC DNA]</scope>
    <source>
        <strain>DSM 21063 / JCM 11548 / VA1</strain>
    </source>
</reference>
<comment type="similarity">
    <text evidence="1">Belongs to the UPF0248 family.</text>
</comment>
<name>Y252_PYRCJ</name>
<gene>
    <name type="ordered locus">Pcal_0252</name>
</gene>